<evidence type="ECO:0000250" key="1"/>
<evidence type="ECO:0000255" key="2">
    <source>
        <dbReference type="PROSITE-ProRule" id="PRU10126"/>
    </source>
</evidence>
<evidence type="ECO:0000305" key="3"/>
<accession>P0A9C3</accession>
<accession>P40681</accession>
<proteinExistence type="evidence at protein level"/>
<keyword id="KW-0119">Carbohydrate metabolism</keyword>
<keyword id="KW-0963">Cytoplasm</keyword>
<keyword id="KW-0903">Direct protein sequencing</keyword>
<keyword id="KW-0413">Isomerase</keyword>
<keyword id="KW-1185">Reference proteome</keyword>
<protein>
    <recommendedName>
        <fullName>Aldose 1-epimerase</fullName>
        <ecNumber>5.1.3.3</ecNumber>
    </recommendedName>
    <alternativeName>
        <fullName>Galactose mutarotase</fullName>
    </alternativeName>
    <alternativeName>
        <fullName>Type-1 mutarotase</fullName>
    </alternativeName>
</protein>
<comment type="function">
    <text>Mutarotase converts alpha-aldose to the beta-anomer. It is active on D-glucose, L-arabinose, D-xylose, D-galactose, maltose and lactose.</text>
</comment>
<comment type="catalytic activity">
    <reaction evidence="2">
        <text>alpha-D-glucose = beta-D-glucose</text>
        <dbReference type="Rhea" id="RHEA:10264"/>
        <dbReference type="ChEBI" id="CHEBI:15903"/>
        <dbReference type="ChEBI" id="CHEBI:17925"/>
        <dbReference type="EC" id="5.1.3.3"/>
    </reaction>
</comment>
<comment type="pathway">
    <text>Carbohydrate metabolism; hexose metabolism.</text>
</comment>
<comment type="subcellular location">
    <subcellularLocation>
        <location evidence="3">Cytoplasm</location>
    </subcellularLocation>
</comment>
<comment type="similarity">
    <text evidence="3">Belongs to the aldose epimerase family.</text>
</comment>
<dbReference type="EC" id="5.1.3.3"/>
<dbReference type="EMBL" id="U13636">
    <property type="protein sequence ID" value="AAB17020.1"/>
    <property type="molecule type" value="Genomic_DNA"/>
</dbReference>
<dbReference type="EMBL" id="U00096">
    <property type="protein sequence ID" value="AAC73843.1"/>
    <property type="molecule type" value="Genomic_DNA"/>
</dbReference>
<dbReference type="EMBL" id="AP009048">
    <property type="protein sequence ID" value="BAA35418.1"/>
    <property type="molecule type" value="Genomic_DNA"/>
</dbReference>
<dbReference type="PIR" id="D64811">
    <property type="entry name" value="D64811"/>
</dbReference>
<dbReference type="RefSeq" id="NP_415277.1">
    <property type="nucleotide sequence ID" value="NC_000913.3"/>
</dbReference>
<dbReference type="RefSeq" id="WP_000931389.1">
    <property type="nucleotide sequence ID" value="NZ_STEB01000028.1"/>
</dbReference>
<dbReference type="SMR" id="P0A9C3"/>
<dbReference type="BioGRID" id="4261710">
    <property type="interactions" value="29"/>
</dbReference>
<dbReference type="DIP" id="DIP-35901N"/>
<dbReference type="FunCoup" id="P0A9C3">
    <property type="interactions" value="513"/>
</dbReference>
<dbReference type="IntAct" id="P0A9C3">
    <property type="interactions" value="4"/>
</dbReference>
<dbReference type="STRING" id="511145.b0756"/>
<dbReference type="jPOST" id="P0A9C3"/>
<dbReference type="PaxDb" id="511145-b0756"/>
<dbReference type="EnsemblBacteria" id="AAC73843">
    <property type="protein sequence ID" value="AAC73843"/>
    <property type="gene ID" value="b0756"/>
</dbReference>
<dbReference type="GeneID" id="944943"/>
<dbReference type="KEGG" id="ecj:JW0739"/>
<dbReference type="KEGG" id="eco:b0756"/>
<dbReference type="KEGG" id="ecoc:C3026_03825"/>
<dbReference type="PATRIC" id="fig|1411691.4.peg.1522"/>
<dbReference type="EchoBASE" id="EB1649"/>
<dbReference type="eggNOG" id="COG2017">
    <property type="taxonomic scope" value="Bacteria"/>
</dbReference>
<dbReference type="HOGENOM" id="CLU_031753_1_0_6"/>
<dbReference type="InParanoid" id="P0A9C3"/>
<dbReference type="OMA" id="IYHHISR"/>
<dbReference type="OrthoDB" id="9779408at2"/>
<dbReference type="PhylomeDB" id="P0A9C3"/>
<dbReference type="BioCyc" id="EcoCyc:ALDOSE1EPIM-MONOMER"/>
<dbReference type="BioCyc" id="MetaCyc:ALDOSE1EPIM-MONOMER"/>
<dbReference type="BRENDA" id="5.1.3.3">
    <property type="organism ID" value="2026"/>
</dbReference>
<dbReference type="SABIO-RK" id="P0A9C3"/>
<dbReference type="UniPathway" id="UPA00242"/>
<dbReference type="PRO" id="PR:P0A9C3"/>
<dbReference type="Proteomes" id="UP000000625">
    <property type="component" value="Chromosome"/>
</dbReference>
<dbReference type="GO" id="GO:0005737">
    <property type="term" value="C:cytoplasm"/>
    <property type="evidence" value="ECO:0000314"/>
    <property type="project" value="EcoCyc"/>
</dbReference>
<dbReference type="GO" id="GO:0004034">
    <property type="term" value="F:aldose 1-epimerase activity"/>
    <property type="evidence" value="ECO:0000314"/>
    <property type="project" value="EcoCyc"/>
</dbReference>
<dbReference type="GO" id="GO:0030246">
    <property type="term" value="F:carbohydrate binding"/>
    <property type="evidence" value="ECO:0007669"/>
    <property type="project" value="InterPro"/>
</dbReference>
<dbReference type="GO" id="GO:0033499">
    <property type="term" value="P:galactose catabolic process via UDP-galactose, Leloir pathway"/>
    <property type="evidence" value="ECO:0000315"/>
    <property type="project" value="EcoCyc"/>
</dbReference>
<dbReference type="GO" id="GO:0006006">
    <property type="term" value="P:glucose metabolic process"/>
    <property type="evidence" value="ECO:0000318"/>
    <property type="project" value="GO_Central"/>
</dbReference>
<dbReference type="CDD" id="cd09019">
    <property type="entry name" value="galactose_mutarotase_like"/>
    <property type="match status" value="1"/>
</dbReference>
<dbReference type="FunFam" id="2.70.98.10:FF:000002">
    <property type="entry name" value="Aldose 1-epimerase"/>
    <property type="match status" value="1"/>
</dbReference>
<dbReference type="Gene3D" id="2.70.98.10">
    <property type="match status" value="1"/>
</dbReference>
<dbReference type="InterPro" id="IPR018052">
    <property type="entry name" value="Ald1_epimerase_CS"/>
</dbReference>
<dbReference type="InterPro" id="IPR013458">
    <property type="entry name" value="Ald_epimerase_bac"/>
</dbReference>
<dbReference type="InterPro" id="IPR015443">
    <property type="entry name" value="Aldose_1-epimerase"/>
</dbReference>
<dbReference type="InterPro" id="IPR008183">
    <property type="entry name" value="Aldose_1/G6P_1-epimerase"/>
</dbReference>
<dbReference type="InterPro" id="IPR011013">
    <property type="entry name" value="Gal_mutarotase_sf_dom"/>
</dbReference>
<dbReference type="InterPro" id="IPR047215">
    <property type="entry name" value="Galactose_mutarotase-like"/>
</dbReference>
<dbReference type="InterPro" id="IPR014718">
    <property type="entry name" value="GH-type_carb-bd"/>
</dbReference>
<dbReference type="NCBIfam" id="TIGR02636">
    <property type="entry name" value="galM_Leloir"/>
    <property type="match status" value="1"/>
</dbReference>
<dbReference type="NCBIfam" id="NF008277">
    <property type="entry name" value="PRK11055.1"/>
    <property type="match status" value="1"/>
</dbReference>
<dbReference type="PANTHER" id="PTHR10091">
    <property type="entry name" value="ALDOSE-1-EPIMERASE"/>
    <property type="match status" value="1"/>
</dbReference>
<dbReference type="PANTHER" id="PTHR10091:SF0">
    <property type="entry name" value="GALACTOSE MUTAROTASE"/>
    <property type="match status" value="1"/>
</dbReference>
<dbReference type="Pfam" id="PF01263">
    <property type="entry name" value="Aldose_epim"/>
    <property type="match status" value="1"/>
</dbReference>
<dbReference type="PIRSF" id="PIRSF005096">
    <property type="entry name" value="GALM"/>
    <property type="match status" value="1"/>
</dbReference>
<dbReference type="SUPFAM" id="SSF74650">
    <property type="entry name" value="Galactose mutarotase-like"/>
    <property type="match status" value="1"/>
</dbReference>
<dbReference type="PROSITE" id="PS00545">
    <property type="entry name" value="ALDOSE_1_EPIMERASE"/>
    <property type="match status" value="1"/>
</dbReference>
<feature type="chain" id="PRO_0000197443" description="Aldose 1-epimerase">
    <location>
        <begin position="1"/>
        <end position="346"/>
    </location>
</feature>
<feature type="active site" description="Proton donor" evidence="2">
    <location>
        <position position="175"/>
    </location>
</feature>
<feature type="active site" description="Proton acceptor" evidence="1">
    <location>
        <position position="309"/>
    </location>
</feature>
<feature type="binding site" evidence="1">
    <location>
        <position position="79"/>
    </location>
    <ligand>
        <name>substrate</name>
    </ligand>
</feature>
<feature type="binding site" evidence="1">
    <location>
        <position position="245"/>
    </location>
    <ligand>
        <name>substrate</name>
    </ligand>
</feature>
<gene>
    <name type="primary">galM</name>
    <name type="ordered locus">b0756</name>
    <name type="ordered locus">JW0739</name>
</gene>
<sequence length="346" mass="38190">MLNETPALAPDGQPYRLLTLRNNAGMVVTLMDWGATLLSARIPLSDGSVREALLGCASPECYQDQAAFLGASIGRYANRIANSRYTFDGETVTLSPSQGVNQLHGGPEGFDKRRWQIVNQNDRQVLFALSSDDGDQGFPGNLGATVQYRLTDDNRISITYRATVDKPCPVNMTNHVYFNLDGEQSDVRNHKLQILADEYLPVDEGGIPHDGLKSVAGTSFDFRSAKIIASEFLADDDQRKVKGYDHAFLLQAKGDGKKVAAHVWSADEKLQLKVYTTAPALQFYSGNFLGGTPSRGTEPYADWQGLALESEFLPDSPNHPEWPQPDCFLRPGEEYSSLTEYQFIAE</sequence>
<organism>
    <name type="scientific">Escherichia coli (strain K12)</name>
    <dbReference type="NCBI Taxonomy" id="83333"/>
    <lineage>
        <taxon>Bacteria</taxon>
        <taxon>Pseudomonadati</taxon>
        <taxon>Pseudomonadota</taxon>
        <taxon>Gammaproteobacteria</taxon>
        <taxon>Enterobacterales</taxon>
        <taxon>Enterobacteriaceae</taxon>
        <taxon>Escherichia</taxon>
    </lineage>
</organism>
<name>GALM_ECOLI</name>
<reference key="1">
    <citation type="journal article" date="1994" name="J. Mol. Biol.">
        <title>Dependence of lactose metabolism upon mutarotase encoded in the gal operon in Escherichia coli.</title>
        <authorList>
            <person name="Bouffard G.G."/>
            <person name="Rudd K.E."/>
            <person name="Adhya S.L."/>
        </authorList>
    </citation>
    <scope>NUCLEOTIDE SEQUENCE [GENOMIC DNA]</scope>
    <scope>PROTEIN SEQUENCE OF 1-14</scope>
    <source>
        <strain>K12 / SA1308</strain>
    </source>
</reference>
<reference key="2">
    <citation type="journal article" date="1996" name="DNA Res.">
        <title>A 718-kb DNA sequence of the Escherichia coli K-12 genome corresponding to the 12.7-28.0 min region on the linkage map.</title>
        <authorList>
            <person name="Oshima T."/>
            <person name="Aiba H."/>
            <person name="Baba T."/>
            <person name="Fujita K."/>
            <person name="Hayashi K."/>
            <person name="Honjo A."/>
            <person name="Ikemoto K."/>
            <person name="Inada T."/>
            <person name="Itoh T."/>
            <person name="Kajihara M."/>
            <person name="Kanai K."/>
            <person name="Kashimoto K."/>
            <person name="Kimura S."/>
            <person name="Kitagawa M."/>
            <person name="Makino K."/>
            <person name="Masuda S."/>
            <person name="Miki T."/>
            <person name="Mizobuchi K."/>
            <person name="Mori H."/>
            <person name="Motomura K."/>
            <person name="Nakamura Y."/>
            <person name="Nashimoto H."/>
            <person name="Nishio Y."/>
            <person name="Saito N."/>
            <person name="Sampei G."/>
            <person name="Seki Y."/>
            <person name="Tagami H."/>
            <person name="Takemoto K."/>
            <person name="Wada C."/>
            <person name="Yamamoto Y."/>
            <person name="Yano M."/>
            <person name="Horiuchi T."/>
        </authorList>
    </citation>
    <scope>NUCLEOTIDE SEQUENCE [LARGE SCALE GENOMIC DNA]</scope>
    <source>
        <strain>K12 / W3110 / ATCC 27325 / DSM 5911</strain>
    </source>
</reference>
<reference key="3">
    <citation type="journal article" date="1997" name="Science">
        <title>The complete genome sequence of Escherichia coli K-12.</title>
        <authorList>
            <person name="Blattner F.R."/>
            <person name="Plunkett G. III"/>
            <person name="Bloch C.A."/>
            <person name="Perna N.T."/>
            <person name="Burland V."/>
            <person name="Riley M."/>
            <person name="Collado-Vides J."/>
            <person name="Glasner J.D."/>
            <person name="Rode C.K."/>
            <person name="Mayhew G.F."/>
            <person name="Gregor J."/>
            <person name="Davis N.W."/>
            <person name="Kirkpatrick H.A."/>
            <person name="Goeden M.A."/>
            <person name="Rose D.J."/>
            <person name="Mau B."/>
            <person name="Shao Y."/>
        </authorList>
    </citation>
    <scope>NUCLEOTIDE SEQUENCE [LARGE SCALE GENOMIC DNA]</scope>
    <source>
        <strain>K12 / MG1655 / ATCC 47076</strain>
    </source>
</reference>
<reference key="4">
    <citation type="journal article" date="2006" name="Mol. Syst. Biol.">
        <title>Highly accurate genome sequences of Escherichia coli K-12 strains MG1655 and W3110.</title>
        <authorList>
            <person name="Hayashi K."/>
            <person name="Morooka N."/>
            <person name="Yamamoto Y."/>
            <person name="Fujita K."/>
            <person name="Isono K."/>
            <person name="Choi S."/>
            <person name="Ohtsubo E."/>
            <person name="Baba T."/>
            <person name="Wanner B.L."/>
            <person name="Mori H."/>
            <person name="Horiuchi T."/>
        </authorList>
    </citation>
    <scope>NUCLEOTIDE SEQUENCE [LARGE SCALE GENOMIC DNA]</scope>
    <source>
        <strain>K12 / W3110 / ATCC 27325 / DSM 5911</strain>
    </source>
</reference>